<accession>B7IPS6</accession>
<proteinExistence type="inferred from homology"/>
<reference key="1">
    <citation type="submission" date="2008-10" db="EMBL/GenBank/DDBJ databases">
        <title>Genome sequence of Bacillus cereus G9842.</title>
        <authorList>
            <person name="Dodson R.J."/>
            <person name="Durkin A.S."/>
            <person name="Rosovitz M.J."/>
            <person name="Rasko D.A."/>
            <person name="Hoffmaster A."/>
            <person name="Ravel J."/>
            <person name="Sutton G."/>
        </authorList>
    </citation>
    <scope>NUCLEOTIDE SEQUENCE [LARGE SCALE GENOMIC DNA]</scope>
    <source>
        <strain>G9842</strain>
    </source>
</reference>
<gene>
    <name evidence="1" type="primary">lgt</name>
    <name type="ordered locus">BCG9842_B5676</name>
</gene>
<evidence type="ECO:0000255" key="1">
    <source>
        <dbReference type="HAMAP-Rule" id="MF_01147"/>
    </source>
</evidence>
<feature type="chain" id="PRO_1000137397" description="Phosphatidylglycerol--prolipoprotein diacylglyceryl transferase">
    <location>
        <begin position="1"/>
        <end position="270"/>
    </location>
</feature>
<feature type="transmembrane region" description="Helical" evidence="1">
    <location>
        <begin position="19"/>
        <end position="39"/>
    </location>
</feature>
<feature type="transmembrane region" description="Helical" evidence="1">
    <location>
        <begin position="56"/>
        <end position="76"/>
    </location>
</feature>
<feature type="transmembrane region" description="Helical" evidence="1">
    <location>
        <begin position="92"/>
        <end position="112"/>
    </location>
</feature>
<feature type="transmembrane region" description="Helical" evidence="1">
    <location>
        <begin position="116"/>
        <end position="136"/>
    </location>
</feature>
<feature type="transmembrane region" description="Helical" evidence="1">
    <location>
        <begin position="178"/>
        <end position="198"/>
    </location>
</feature>
<feature type="transmembrane region" description="Helical" evidence="1">
    <location>
        <begin position="206"/>
        <end position="226"/>
    </location>
</feature>
<feature type="transmembrane region" description="Helical" evidence="1">
    <location>
        <begin position="236"/>
        <end position="256"/>
    </location>
</feature>
<feature type="binding site" evidence="1">
    <location>
        <position position="138"/>
    </location>
    <ligand>
        <name>a 1,2-diacyl-sn-glycero-3-phospho-(1'-sn-glycerol)</name>
        <dbReference type="ChEBI" id="CHEBI:64716"/>
    </ligand>
</feature>
<dbReference type="EC" id="2.5.1.145" evidence="1"/>
<dbReference type="EMBL" id="CP001186">
    <property type="protein sequence ID" value="ACK93339.1"/>
    <property type="molecule type" value="Genomic_DNA"/>
</dbReference>
<dbReference type="RefSeq" id="WP_000924241.1">
    <property type="nucleotide sequence ID" value="NC_011772.1"/>
</dbReference>
<dbReference type="SMR" id="B7IPS6"/>
<dbReference type="KEGG" id="bcg:BCG9842_B5676"/>
<dbReference type="HOGENOM" id="CLU_013386_0_1_9"/>
<dbReference type="UniPathway" id="UPA00664"/>
<dbReference type="Proteomes" id="UP000006744">
    <property type="component" value="Chromosome"/>
</dbReference>
<dbReference type="GO" id="GO:0005886">
    <property type="term" value="C:plasma membrane"/>
    <property type="evidence" value="ECO:0007669"/>
    <property type="project" value="UniProtKB-SubCell"/>
</dbReference>
<dbReference type="GO" id="GO:0008961">
    <property type="term" value="F:phosphatidylglycerol-prolipoprotein diacylglyceryl transferase activity"/>
    <property type="evidence" value="ECO:0007669"/>
    <property type="project" value="UniProtKB-UniRule"/>
</dbReference>
<dbReference type="GO" id="GO:0042158">
    <property type="term" value="P:lipoprotein biosynthetic process"/>
    <property type="evidence" value="ECO:0007669"/>
    <property type="project" value="UniProtKB-UniRule"/>
</dbReference>
<dbReference type="HAMAP" id="MF_01147">
    <property type="entry name" value="Lgt"/>
    <property type="match status" value="1"/>
</dbReference>
<dbReference type="InterPro" id="IPR001640">
    <property type="entry name" value="Lgt"/>
</dbReference>
<dbReference type="NCBIfam" id="TIGR00544">
    <property type="entry name" value="lgt"/>
    <property type="match status" value="1"/>
</dbReference>
<dbReference type="PANTHER" id="PTHR30589:SF0">
    <property type="entry name" value="PHOSPHATIDYLGLYCEROL--PROLIPOPROTEIN DIACYLGLYCERYL TRANSFERASE"/>
    <property type="match status" value="1"/>
</dbReference>
<dbReference type="PANTHER" id="PTHR30589">
    <property type="entry name" value="PROLIPOPROTEIN DIACYLGLYCERYL TRANSFERASE"/>
    <property type="match status" value="1"/>
</dbReference>
<dbReference type="Pfam" id="PF01790">
    <property type="entry name" value="LGT"/>
    <property type="match status" value="1"/>
</dbReference>
<dbReference type="PROSITE" id="PS01311">
    <property type="entry name" value="LGT"/>
    <property type="match status" value="1"/>
</dbReference>
<keyword id="KW-1003">Cell membrane</keyword>
<keyword id="KW-0472">Membrane</keyword>
<keyword id="KW-0808">Transferase</keyword>
<keyword id="KW-0812">Transmembrane</keyword>
<keyword id="KW-1133">Transmembrane helix</keyword>
<comment type="function">
    <text evidence="1">Catalyzes the transfer of the diacylglyceryl group from phosphatidylglycerol to the sulfhydryl group of the N-terminal cysteine of a prolipoprotein, the first step in the formation of mature lipoproteins.</text>
</comment>
<comment type="catalytic activity">
    <reaction evidence="1">
        <text>L-cysteinyl-[prolipoprotein] + a 1,2-diacyl-sn-glycero-3-phospho-(1'-sn-glycerol) = an S-1,2-diacyl-sn-glyceryl-L-cysteinyl-[prolipoprotein] + sn-glycerol 1-phosphate + H(+)</text>
        <dbReference type="Rhea" id="RHEA:56712"/>
        <dbReference type="Rhea" id="RHEA-COMP:14679"/>
        <dbReference type="Rhea" id="RHEA-COMP:14680"/>
        <dbReference type="ChEBI" id="CHEBI:15378"/>
        <dbReference type="ChEBI" id="CHEBI:29950"/>
        <dbReference type="ChEBI" id="CHEBI:57685"/>
        <dbReference type="ChEBI" id="CHEBI:64716"/>
        <dbReference type="ChEBI" id="CHEBI:140658"/>
        <dbReference type="EC" id="2.5.1.145"/>
    </reaction>
</comment>
<comment type="pathway">
    <text evidence="1">Protein modification; lipoprotein biosynthesis (diacylglyceryl transfer).</text>
</comment>
<comment type="subcellular location">
    <subcellularLocation>
        <location evidence="1">Cell membrane</location>
        <topology evidence="1">Multi-pass membrane protein</topology>
    </subcellularLocation>
</comment>
<comment type="similarity">
    <text evidence="1">Belongs to the Lgt family.</text>
</comment>
<protein>
    <recommendedName>
        <fullName evidence="1">Phosphatidylglycerol--prolipoprotein diacylglyceryl transferase</fullName>
        <ecNumber evidence="1">2.5.1.145</ecNumber>
    </recommendedName>
</protein>
<name>LGT_BACC2</name>
<sequence>MLLGSVPQLDRVAVQLGPFPVYWYGIIIGTGVLLGLWLATREGERLGIPKDTFVDLVLIAVPIAILFARMYYVIFEWEYYAQNPSQIINIRQGGLAIHGGLIGAVITGILFAKRRGVSFWKLADIAAPSILLGQAIGRWGNFMNQEAHGDEVTRQFLEGLHLPDFIINQMYIEGVYYHPTFLYESLWNFVGVILLLALRKVNLRRGELFFTYLIWYSVGRFFVEGLRTDSLMLGPLRIAQVMSIGLVVISIIFIIVRRKMGQADKRYSEN</sequence>
<organism>
    <name type="scientific">Bacillus cereus (strain G9842)</name>
    <dbReference type="NCBI Taxonomy" id="405531"/>
    <lineage>
        <taxon>Bacteria</taxon>
        <taxon>Bacillati</taxon>
        <taxon>Bacillota</taxon>
        <taxon>Bacilli</taxon>
        <taxon>Bacillales</taxon>
        <taxon>Bacillaceae</taxon>
        <taxon>Bacillus</taxon>
        <taxon>Bacillus cereus group</taxon>
    </lineage>
</organism>